<accession>A0QJB7</accession>
<reference key="1">
    <citation type="submission" date="2006-10" db="EMBL/GenBank/DDBJ databases">
        <authorList>
            <person name="Fleischmann R.D."/>
            <person name="Dodson R.J."/>
            <person name="Haft D.H."/>
            <person name="Merkel J.S."/>
            <person name="Nelson W.C."/>
            <person name="Fraser C.M."/>
        </authorList>
    </citation>
    <scope>NUCLEOTIDE SEQUENCE [LARGE SCALE GENOMIC DNA]</scope>
    <source>
        <strain>104</strain>
    </source>
</reference>
<name>LEUC_MYCA1</name>
<keyword id="KW-0004">4Fe-4S</keyword>
<keyword id="KW-0028">Amino-acid biosynthesis</keyword>
<keyword id="KW-0100">Branched-chain amino acid biosynthesis</keyword>
<keyword id="KW-0408">Iron</keyword>
<keyword id="KW-0411">Iron-sulfur</keyword>
<keyword id="KW-0432">Leucine biosynthesis</keyword>
<keyword id="KW-0456">Lyase</keyword>
<keyword id="KW-0479">Metal-binding</keyword>
<sequence>MGIDAGTTATPRTLAEKVWDDHVVVSGGANEPDLIYIDLHLVHEVTSPQAFDGLRLAGRPVRRPDLTLATEDHNVPTIDIDKPIADPVSRTQVETLRRNCAEFGVRLYPMGDAEQGIVHVVGPQLGLTQPGMTVVCGDSHTSTHGAFGALAMGIGTSEVEHVLATQTLPLRPFKTMAVNVDGELPAGVTAKDIILALIAKIGTGGGQGHVIEYRGSAIESLSMEGRMTVCNMSIEAGARAGMIAPDDTTYEFLRDRPHAPKGAQWDAAMRYWQQLRTDPGAVFDTEVYLDAASLSPFVTWGTNPGQGVPLAAAVPDPELMTDDAERQAAEKALAYMDLRPGTPMRDIAVDAVFVGSCTNGRIEDLRVVADVLRGRKVAPGVRMLVVPGSMRVRAQAEAEGLGEVFTAAGAEWRQAGCSMCLGMNPDQLAPGERCAATSNRNFEGRQGKGGRTHLVSPAVAAATAVRGTLSAPADLD</sequence>
<evidence type="ECO:0000255" key="1">
    <source>
        <dbReference type="HAMAP-Rule" id="MF_01026"/>
    </source>
</evidence>
<feature type="chain" id="PRO_1000063572" description="3-isopropylmalate dehydratase large subunit">
    <location>
        <begin position="1"/>
        <end position="476"/>
    </location>
</feature>
<feature type="binding site" evidence="1">
    <location>
        <position position="357"/>
    </location>
    <ligand>
        <name>[4Fe-4S] cluster</name>
        <dbReference type="ChEBI" id="CHEBI:49883"/>
    </ligand>
</feature>
<feature type="binding site" evidence="1">
    <location>
        <position position="417"/>
    </location>
    <ligand>
        <name>[4Fe-4S] cluster</name>
        <dbReference type="ChEBI" id="CHEBI:49883"/>
    </ligand>
</feature>
<feature type="binding site" evidence="1">
    <location>
        <position position="420"/>
    </location>
    <ligand>
        <name>[4Fe-4S] cluster</name>
        <dbReference type="ChEBI" id="CHEBI:49883"/>
    </ligand>
</feature>
<comment type="function">
    <text evidence="1">Catalyzes the isomerization between 2-isopropylmalate and 3-isopropylmalate, via the formation of 2-isopropylmaleate.</text>
</comment>
<comment type="catalytic activity">
    <reaction evidence="1">
        <text>(2R,3S)-3-isopropylmalate = (2S)-2-isopropylmalate</text>
        <dbReference type="Rhea" id="RHEA:32287"/>
        <dbReference type="ChEBI" id="CHEBI:1178"/>
        <dbReference type="ChEBI" id="CHEBI:35121"/>
        <dbReference type="EC" id="4.2.1.33"/>
    </reaction>
</comment>
<comment type="cofactor">
    <cofactor evidence="1">
        <name>[4Fe-4S] cluster</name>
        <dbReference type="ChEBI" id="CHEBI:49883"/>
    </cofactor>
    <text evidence="1">Binds 1 [4Fe-4S] cluster per subunit.</text>
</comment>
<comment type="pathway">
    <text evidence="1">Amino-acid biosynthesis; L-leucine biosynthesis; L-leucine from 3-methyl-2-oxobutanoate: step 2/4.</text>
</comment>
<comment type="subunit">
    <text evidence="1">Heterodimer of LeuC and LeuD.</text>
</comment>
<comment type="similarity">
    <text evidence="1">Belongs to the aconitase/IPM isomerase family. LeuC type 1 subfamily.</text>
</comment>
<proteinExistence type="inferred from homology"/>
<dbReference type="EC" id="4.2.1.33" evidence="1"/>
<dbReference type="EMBL" id="CP000479">
    <property type="protein sequence ID" value="ABK65213.1"/>
    <property type="molecule type" value="Genomic_DNA"/>
</dbReference>
<dbReference type="RefSeq" id="WP_009978235.1">
    <property type="nucleotide sequence ID" value="NC_008595.1"/>
</dbReference>
<dbReference type="SMR" id="A0QJB7"/>
<dbReference type="KEGG" id="mav:MAV_3838"/>
<dbReference type="HOGENOM" id="CLU_006714_3_4_11"/>
<dbReference type="UniPathway" id="UPA00048">
    <property type="reaction ID" value="UER00071"/>
</dbReference>
<dbReference type="Proteomes" id="UP000001574">
    <property type="component" value="Chromosome"/>
</dbReference>
<dbReference type="GO" id="GO:0003861">
    <property type="term" value="F:3-isopropylmalate dehydratase activity"/>
    <property type="evidence" value="ECO:0007669"/>
    <property type="project" value="UniProtKB-UniRule"/>
</dbReference>
<dbReference type="GO" id="GO:0051539">
    <property type="term" value="F:4 iron, 4 sulfur cluster binding"/>
    <property type="evidence" value="ECO:0007669"/>
    <property type="project" value="UniProtKB-KW"/>
</dbReference>
<dbReference type="GO" id="GO:0046872">
    <property type="term" value="F:metal ion binding"/>
    <property type="evidence" value="ECO:0007669"/>
    <property type="project" value="UniProtKB-KW"/>
</dbReference>
<dbReference type="GO" id="GO:0009098">
    <property type="term" value="P:L-leucine biosynthetic process"/>
    <property type="evidence" value="ECO:0007669"/>
    <property type="project" value="UniProtKB-UniRule"/>
</dbReference>
<dbReference type="CDD" id="cd01583">
    <property type="entry name" value="IPMI"/>
    <property type="match status" value="1"/>
</dbReference>
<dbReference type="FunFam" id="3.30.499.10:FF:000006">
    <property type="entry name" value="3-isopropylmalate dehydratase large subunit"/>
    <property type="match status" value="1"/>
</dbReference>
<dbReference type="FunFam" id="3.30.499.10:FF:000007">
    <property type="entry name" value="3-isopropylmalate dehydratase large subunit"/>
    <property type="match status" value="1"/>
</dbReference>
<dbReference type="Gene3D" id="3.30.499.10">
    <property type="entry name" value="Aconitase, domain 3"/>
    <property type="match status" value="2"/>
</dbReference>
<dbReference type="HAMAP" id="MF_01026">
    <property type="entry name" value="LeuC_type1"/>
    <property type="match status" value="1"/>
</dbReference>
<dbReference type="InterPro" id="IPR004430">
    <property type="entry name" value="3-IsopropMal_deHydase_lsu"/>
</dbReference>
<dbReference type="InterPro" id="IPR015931">
    <property type="entry name" value="Acnase/IPM_dHydase_lsu_aba_1/3"/>
</dbReference>
<dbReference type="InterPro" id="IPR001030">
    <property type="entry name" value="Acoase/IPM_deHydtase_lsu_aba"/>
</dbReference>
<dbReference type="InterPro" id="IPR018136">
    <property type="entry name" value="Aconitase_4Fe-4S_BS"/>
</dbReference>
<dbReference type="InterPro" id="IPR036008">
    <property type="entry name" value="Aconitase_4Fe-4S_dom"/>
</dbReference>
<dbReference type="InterPro" id="IPR050067">
    <property type="entry name" value="IPM_dehydratase_rel_enz"/>
</dbReference>
<dbReference type="InterPro" id="IPR033941">
    <property type="entry name" value="IPMI_cat"/>
</dbReference>
<dbReference type="NCBIfam" id="TIGR00170">
    <property type="entry name" value="leuC"/>
    <property type="match status" value="1"/>
</dbReference>
<dbReference type="NCBIfam" id="NF004016">
    <property type="entry name" value="PRK05478.1"/>
    <property type="match status" value="1"/>
</dbReference>
<dbReference type="NCBIfam" id="NF009116">
    <property type="entry name" value="PRK12466.1"/>
    <property type="match status" value="1"/>
</dbReference>
<dbReference type="PANTHER" id="PTHR43822:SF9">
    <property type="entry name" value="3-ISOPROPYLMALATE DEHYDRATASE"/>
    <property type="match status" value="1"/>
</dbReference>
<dbReference type="PANTHER" id="PTHR43822">
    <property type="entry name" value="HOMOACONITASE, MITOCHONDRIAL-RELATED"/>
    <property type="match status" value="1"/>
</dbReference>
<dbReference type="Pfam" id="PF00330">
    <property type="entry name" value="Aconitase"/>
    <property type="match status" value="1"/>
</dbReference>
<dbReference type="PRINTS" id="PR00415">
    <property type="entry name" value="ACONITASE"/>
</dbReference>
<dbReference type="SUPFAM" id="SSF53732">
    <property type="entry name" value="Aconitase iron-sulfur domain"/>
    <property type="match status" value="1"/>
</dbReference>
<dbReference type="PROSITE" id="PS00450">
    <property type="entry name" value="ACONITASE_1"/>
    <property type="match status" value="1"/>
</dbReference>
<dbReference type="PROSITE" id="PS01244">
    <property type="entry name" value="ACONITASE_2"/>
    <property type="match status" value="1"/>
</dbReference>
<organism>
    <name type="scientific">Mycobacterium avium (strain 104)</name>
    <dbReference type="NCBI Taxonomy" id="243243"/>
    <lineage>
        <taxon>Bacteria</taxon>
        <taxon>Bacillati</taxon>
        <taxon>Actinomycetota</taxon>
        <taxon>Actinomycetes</taxon>
        <taxon>Mycobacteriales</taxon>
        <taxon>Mycobacteriaceae</taxon>
        <taxon>Mycobacterium</taxon>
        <taxon>Mycobacterium avium complex (MAC)</taxon>
    </lineage>
</organism>
<protein>
    <recommendedName>
        <fullName evidence="1">3-isopropylmalate dehydratase large subunit</fullName>
        <ecNumber evidence="1">4.2.1.33</ecNumber>
    </recommendedName>
    <alternativeName>
        <fullName evidence="1">Alpha-IPM isomerase</fullName>
        <shortName evidence="1">IPMI</shortName>
    </alternativeName>
    <alternativeName>
        <fullName evidence="1">Isopropylmalate isomerase</fullName>
    </alternativeName>
</protein>
<gene>
    <name evidence="1" type="primary">leuC</name>
    <name type="ordered locus">MAV_3838</name>
</gene>